<keyword id="KW-1003">Cell membrane</keyword>
<keyword id="KW-0472">Membrane</keyword>
<keyword id="KW-0812">Transmembrane</keyword>
<keyword id="KW-1133">Transmembrane helix</keyword>
<sequence>MERFLENVMYASRWLLAPVYFGLSLALIALALKFFQEILHVLPNVFALAEADLILVLLSLVDMTLVGGLLVMVMFSGYENFVSQLDISAGKEKLNWLGKMDATSLKNKVAASIVAISSIHLLRVFMDAKNVPDNKLMWYVIIHLTFVLSAFVMGYLDRLTRHNH</sequence>
<feature type="chain" id="PRO_1000197577" description="UPF0114 protein YqhA">
    <location>
        <begin position="1"/>
        <end position="164"/>
    </location>
</feature>
<feature type="transmembrane region" description="Helical" evidence="1">
    <location>
        <begin position="15"/>
        <end position="35"/>
    </location>
</feature>
<feature type="transmembrane region" description="Helical" evidence="1">
    <location>
        <begin position="53"/>
        <end position="73"/>
    </location>
</feature>
<feature type="transmembrane region" description="Helical" evidence="1">
    <location>
        <begin position="136"/>
        <end position="156"/>
    </location>
</feature>
<proteinExistence type="inferred from homology"/>
<organism>
    <name type="scientific">Salmonella paratyphi C (strain RKS4594)</name>
    <dbReference type="NCBI Taxonomy" id="476213"/>
    <lineage>
        <taxon>Bacteria</taxon>
        <taxon>Pseudomonadati</taxon>
        <taxon>Pseudomonadota</taxon>
        <taxon>Gammaproteobacteria</taxon>
        <taxon>Enterobacterales</taxon>
        <taxon>Enterobacteriaceae</taxon>
        <taxon>Salmonella</taxon>
    </lineage>
</organism>
<dbReference type="EMBL" id="CP000857">
    <property type="protein sequence ID" value="ACN47308.1"/>
    <property type="molecule type" value="Genomic_DNA"/>
</dbReference>
<dbReference type="RefSeq" id="WP_000439335.1">
    <property type="nucleotide sequence ID" value="NC_012125.1"/>
</dbReference>
<dbReference type="KEGG" id="sei:SPC_3223"/>
<dbReference type="HOGENOM" id="CLU_097887_1_1_6"/>
<dbReference type="Proteomes" id="UP000001599">
    <property type="component" value="Chromosome"/>
</dbReference>
<dbReference type="GO" id="GO:0005886">
    <property type="term" value="C:plasma membrane"/>
    <property type="evidence" value="ECO:0007669"/>
    <property type="project" value="UniProtKB-SubCell"/>
</dbReference>
<dbReference type="HAMAP" id="MF_00143">
    <property type="entry name" value="UPF0114"/>
    <property type="match status" value="1"/>
</dbReference>
<dbReference type="InterPro" id="IPR005134">
    <property type="entry name" value="UPF0114"/>
</dbReference>
<dbReference type="InterPro" id="IPR020761">
    <property type="entry name" value="UPF0114_bac"/>
</dbReference>
<dbReference type="NCBIfam" id="TIGR00645">
    <property type="entry name" value="HI0507"/>
    <property type="match status" value="1"/>
</dbReference>
<dbReference type="PANTHER" id="PTHR38596">
    <property type="entry name" value="UPF0114 PROTEIN YQHA"/>
    <property type="match status" value="1"/>
</dbReference>
<dbReference type="PANTHER" id="PTHR38596:SF1">
    <property type="entry name" value="UPF0114 PROTEIN YQHA"/>
    <property type="match status" value="1"/>
</dbReference>
<dbReference type="Pfam" id="PF03350">
    <property type="entry name" value="UPF0114"/>
    <property type="match status" value="1"/>
</dbReference>
<reference key="1">
    <citation type="journal article" date="2009" name="PLoS ONE">
        <title>Salmonella paratyphi C: genetic divergence from Salmonella choleraesuis and pathogenic convergence with Salmonella typhi.</title>
        <authorList>
            <person name="Liu W.-Q."/>
            <person name="Feng Y."/>
            <person name="Wang Y."/>
            <person name="Zou Q.-H."/>
            <person name="Chen F."/>
            <person name="Guo J.-T."/>
            <person name="Peng Y.-H."/>
            <person name="Jin Y."/>
            <person name="Li Y.-G."/>
            <person name="Hu S.-N."/>
            <person name="Johnston R.N."/>
            <person name="Liu G.-R."/>
            <person name="Liu S.-L."/>
        </authorList>
    </citation>
    <scope>NUCLEOTIDE SEQUENCE [LARGE SCALE GENOMIC DNA]</scope>
    <source>
        <strain>RKS4594</strain>
    </source>
</reference>
<protein>
    <recommendedName>
        <fullName evidence="1">UPF0114 protein YqhA</fullName>
    </recommendedName>
</protein>
<name>YQHA_SALPC</name>
<comment type="subcellular location">
    <subcellularLocation>
        <location evidence="1">Cell membrane</location>
        <topology evidence="1">Multi-pass membrane protein</topology>
    </subcellularLocation>
</comment>
<comment type="similarity">
    <text evidence="1">Belongs to the UPF0114 family.</text>
</comment>
<gene>
    <name evidence="1" type="primary">yqhA</name>
    <name type="ordered locus">SPC_3223</name>
</gene>
<evidence type="ECO:0000255" key="1">
    <source>
        <dbReference type="HAMAP-Rule" id="MF_00143"/>
    </source>
</evidence>
<accession>C0PYD4</accession>